<keyword id="KW-0067">ATP-binding</keyword>
<keyword id="KW-0131">Cell cycle</keyword>
<keyword id="KW-0132">Cell division</keyword>
<keyword id="KW-0133">Cell shape</keyword>
<keyword id="KW-0961">Cell wall biogenesis/degradation</keyword>
<keyword id="KW-0963">Cytoplasm</keyword>
<keyword id="KW-0436">Ligase</keyword>
<keyword id="KW-0547">Nucleotide-binding</keyword>
<keyword id="KW-0573">Peptidoglycan synthesis</keyword>
<accession>Q4UWX9</accession>
<gene>
    <name evidence="1" type="primary">murD2</name>
    <name type="ordered locus">XC_1375</name>
</gene>
<dbReference type="EC" id="6.3.2.53" evidence="1"/>
<dbReference type="EMBL" id="CP000050">
    <property type="protein sequence ID" value="AAY48444.1"/>
    <property type="molecule type" value="Genomic_DNA"/>
</dbReference>
<dbReference type="SMR" id="Q4UWX9"/>
<dbReference type="KEGG" id="xcb:XC_1375"/>
<dbReference type="HOGENOM" id="CLU_032540_4_1_6"/>
<dbReference type="UniPathway" id="UPA00219"/>
<dbReference type="Proteomes" id="UP000000420">
    <property type="component" value="Chromosome"/>
</dbReference>
<dbReference type="GO" id="GO:0005737">
    <property type="term" value="C:cytoplasm"/>
    <property type="evidence" value="ECO:0007669"/>
    <property type="project" value="UniProtKB-SubCell"/>
</dbReference>
<dbReference type="GO" id="GO:0005524">
    <property type="term" value="F:ATP binding"/>
    <property type="evidence" value="ECO:0007669"/>
    <property type="project" value="UniProtKB-UniRule"/>
</dbReference>
<dbReference type="GO" id="GO:0004326">
    <property type="term" value="F:tetrahydrofolylpolyglutamate synthase activity"/>
    <property type="evidence" value="ECO:0007669"/>
    <property type="project" value="InterPro"/>
</dbReference>
<dbReference type="GO" id="GO:0008764">
    <property type="term" value="F:UDP-N-acetylmuramoylalanine-D-glutamate ligase activity"/>
    <property type="evidence" value="ECO:0007669"/>
    <property type="project" value="InterPro"/>
</dbReference>
<dbReference type="GO" id="GO:0051301">
    <property type="term" value="P:cell division"/>
    <property type="evidence" value="ECO:0007669"/>
    <property type="project" value="UniProtKB-KW"/>
</dbReference>
<dbReference type="GO" id="GO:0071555">
    <property type="term" value="P:cell wall organization"/>
    <property type="evidence" value="ECO:0007669"/>
    <property type="project" value="UniProtKB-KW"/>
</dbReference>
<dbReference type="GO" id="GO:0009252">
    <property type="term" value="P:peptidoglycan biosynthetic process"/>
    <property type="evidence" value="ECO:0007669"/>
    <property type="project" value="UniProtKB-UniRule"/>
</dbReference>
<dbReference type="GO" id="GO:0008360">
    <property type="term" value="P:regulation of cell shape"/>
    <property type="evidence" value="ECO:0007669"/>
    <property type="project" value="UniProtKB-KW"/>
</dbReference>
<dbReference type="Gene3D" id="3.90.190.20">
    <property type="entry name" value="Mur ligase, C-terminal domain"/>
    <property type="match status" value="1"/>
</dbReference>
<dbReference type="Gene3D" id="3.40.1190.10">
    <property type="entry name" value="Mur-like, catalytic domain"/>
    <property type="match status" value="1"/>
</dbReference>
<dbReference type="Gene3D" id="3.40.50.720">
    <property type="entry name" value="NAD(P)-binding Rossmann-like Domain"/>
    <property type="match status" value="1"/>
</dbReference>
<dbReference type="HAMAP" id="MF_00639">
    <property type="entry name" value="MurD"/>
    <property type="match status" value="1"/>
</dbReference>
<dbReference type="HAMAP" id="MF_02208">
    <property type="entry name" value="MurD2_subfam"/>
    <property type="match status" value="1"/>
</dbReference>
<dbReference type="InterPro" id="IPR018109">
    <property type="entry name" value="Folylpolyglutamate_synth_CS"/>
</dbReference>
<dbReference type="InterPro" id="IPR036565">
    <property type="entry name" value="Mur-like_cat_sf"/>
</dbReference>
<dbReference type="InterPro" id="IPR004101">
    <property type="entry name" value="Mur_ligase_C"/>
</dbReference>
<dbReference type="InterPro" id="IPR036615">
    <property type="entry name" value="Mur_ligase_C_dom_sf"/>
</dbReference>
<dbReference type="InterPro" id="IPR013221">
    <property type="entry name" value="Mur_ligase_cen"/>
</dbReference>
<dbReference type="InterPro" id="IPR005762">
    <property type="entry name" value="MurD"/>
</dbReference>
<dbReference type="InterPro" id="IPR043687">
    <property type="entry name" value="MurD2"/>
</dbReference>
<dbReference type="NCBIfam" id="TIGR01087">
    <property type="entry name" value="murD"/>
    <property type="match status" value="1"/>
</dbReference>
<dbReference type="PANTHER" id="PTHR43692">
    <property type="entry name" value="UDP-N-ACETYLMURAMOYLALANINE--D-GLUTAMATE LIGASE"/>
    <property type="match status" value="1"/>
</dbReference>
<dbReference type="PANTHER" id="PTHR43692:SF1">
    <property type="entry name" value="UDP-N-ACETYLMURAMOYLALANINE--D-GLUTAMATE LIGASE"/>
    <property type="match status" value="1"/>
</dbReference>
<dbReference type="Pfam" id="PF02875">
    <property type="entry name" value="Mur_ligase_C"/>
    <property type="match status" value="1"/>
</dbReference>
<dbReference type="Pfam" id="PF08245">
    <property type="entry name" value="Mur_ligase_M"/>
    <property type="match status" value="1"/>
</dbReference>
<dbReference type="SUPFAM" id="SSF53623">
    <property type="entry name" value="MurD-like peptide ligases, catalytic domain"/>
    <property type="match status" value="1"/>
</dbReference>
<dbReference type="SUPFAM" id="SSF53244">
    <property type="entry name" value="MurD-like peptide ligases, peptide-binding domain"/>
    <property type="match status" value="1"/>
</dbReference>
<reference key="1">
    <citation type="journal article" date="2005" name="Genome Res.">
        <title>Comparative and functional genomic analyses of the pathogenicity of phytopathogen Xanthomonas campestris pv. campestris.</title>
        <authorList>
            <person name="Qian W."/>
            <person name="Jia Y."/>
            <person name="Ren S.-X."/>
            <person name="He Y.-Q."/>
            <person name="Feng J.-X."/>
            <person name="Lu L.-F."/>
            <person name="Sun Q."/>
            <person name="Ying G."/>
            <person name="Tang D.-J."/>
            <person name="Tang H."/>
            <person name="Wu W."/>
            <person name="Hao P."/>
            <person name="Wang L."/>
            <person name="Jiang B.-L."/>
            <person name="Zeng S."/>
            <person name="Gu W.-Y."/>
            <person name="Lu G."/>
            <person name="Rong L."/>
            <person name="Tian Y."/>
            <person name="Yao Z."/>
            <person name="Fu G."/>
            <person name="Chen B."/>
            <person name="Fang R."/>
            <person name="Qiang B."/>
            <person name="Chen Z."/>
            <person name="Zhao G.-P."/>
            <person name="Tang J.-L."/>
            <person name="He C."/>
        </authorList>
    </citation>
    <scope>NUCLEOTIDE SEQUENCE [LARGE SCALE GENOMIC DNA]</scope>
    <source>
        <strain>8004</strain>
    </source>
</reference>
<sequence>MRISQLEGKAVALWGWAREGRAAYRALRQQLPAQPLTVFCNAEEARDVAALADPALQVQTEASAQALAAFEVVIKSPGISPYREEARAAAAQGARFIGGTALWFAEHAQPDGYVPGAICVTGTKGKSTTTALLAHLLRADGHRTALVGNIGQPLLEVLSPQPPPAYWAIELSSYQTGEVGRSGARPELALVLNLFPEHLDWHGSEAAYVRDKLALVTDGRPRIALLNAADPHLAQLQLPESEVRWFNHPDGWHLRGDVVYRGQQPIFDTANVPLPGEHNRRNLCAVLAAVEALGLDAAALAPAALTFRPLPNRLQWLGSVDGIAYVNDSISTTPHASLAALACFAQQRVALLVGGHDRGLDWQEFAAHMAQQAPLEIVTMGANGPRIHALLAPLAQSAGFGLHAADDLAHAMQLARSALGAQGGVLLLSPGAPSFGVYSDYVARGRHFAQLAGFDPAAISAIPGLGVQ</sequence>
<feature type="chain" id="PRO_0000109128" description="UDP-N-acetylmuramoyl-L-alanine--L-glutamate ligase">
    <location>
        <begin position="1"/>
        <end position="468"/>
    </location>
</feature>
<feature type="binding site" evidence="1">
    <location>
        <begin position="122"/>
        <end position="128"/>
    </location>
    <ligand>
        <name>ATP</name>
        <dbReference type="ChEBI" id="CHEBI:30616"/>
    </ligand>
</feature>
<proteinExistence type="inferred from homology"/>
<protein>
    <recommendedName>
        <fullName evidence="1">UDP-N-acetylmuramoyl-L-alanine--L-glutamate ligase</fullName>
        <ecNumber evidence="1">6.3.2.53</ecNumber>
    </recommendedName>
    <alternativeName>
        <fullName evidence="1">UDP-N-acetylmuramoyl-L-alanyl-L-glutamate synthetase</fullName>
        <shortName evidence="1">UDP-MurNAc-L-Ala-L-Glu synthetase</shortName>
    </alternativeName>
</protein>
<evidence type="ECO:0000255" key="1">
    <source>
        <dbReference type="HAMAP-Rule" id="MF_02208"/>
    </source>
</evidence>
<organism>
    <name type="scientific">Xanthomonas campestris pv. campestris (strain 8004)</name>
    <dbReference type="NCBI Taxonomy" id="314565"/>
    <lineage>
        <taxon>Bacteria</taxon>
        <taxon>Pseudomonadati</taxon>
        <taxon>Pseudomonadota</taxon>
        <taxon>Gammaproteobacteria</taxon>
        <taxon>Lysobacterales</taxon>
        <taxon>Lysobacteraceae</taxon>
        <taxon>Xanthomonas</taxon>
    </lineage>
</organism>
<comment type="function">
    <text evidence="1">Cell wall formation. Catalyzes the addition of L-glutamate to the nucleotide precursor UDP-N-acetylmuramoyl-L-alanine.</text>
</comment>
<comment type="catalytic activity">
    <reaction evidence="1">
        <text>UDP-N-acetyl-alpha-D-muramoyl-L-alanine + L-glutamate + ATP = UDP-N-acetyl-alpha-D-muramoyl-L-alanyl-L-glutamate + ADP + phosphate + H(+)</text>
        <dbReference type="Rhea" id="RHEA:58816"/>
        <dbReference type="ChEBI" id="CHEBI:15378"/>
        <dbReference type="ChEBI" id="CHEBI:29985"/>
        <dbReference type="ChEBI" id="CHEBI:30616"/>
        <dbReference type="ChEBI" id="CHEBI:43474"/>
        <dbReference type="ChEBI" id="CHEBI:83898"/>
        <dbReference type="ChEBI" id="CHEBI:142725"/>
        <dbReference type="ChEBI" id="CHEBI:456216"/>
        <dbReference type="EC" id="6.3.2.53"/>
    </reaction>
</comment>
<comment type="pathway">
    <text evidence="1">Cell wall biogenesis; peptidoglycan biosynthesis.</text>
</comment>
<comment type="subcellular location">
    <subcellularLocation>
        <location evidence="1">Cytoplasm</location>
    </subcellularLocation>
</comment>
<comment type="similarity">
    <text evidence="1">Belongs to the MurCDEF family. MurD2 subfamily.</text>
</comment>
<name>MURD2_XANC8</name>